<evidence type="ECO:0000250" key="1"/>
<evidence type="ECO:0000256" key="2">
    <source>
        <dbReference type="SAM" id="MobiDB-lite"/>
    </source>
</evidence>
<evidence type="ECO:0000305" key="3"/>
<evidence type="ECO:0007744" key="4">
    <source>
    </source>
</evidence>
<dbReference type="EMBL" id="AC006201">
    <property type="protein sequence ID" value="AAM15146.1"/>
    <property type="molecule type" value="Genomic_DNA"/>
</dbReference>
<dbReference type="EMBL" id="AC007212">
    <property type="protein sequence ID" value="AAD31355.1"/>
    <property type="molecule type" value="Genomic_DNA"/>
</dbReference>
<dbReference type="EMBL" id="CP002685">
    <property type="protein sequence ID" value="AEC06727.1"/>
    <property type="molecule type" value="Genomic_DNA"/>
</dbReference>
<dbReference type="EMBL" id="AY065159">
    <property type="protein sequence ID" value="AAL38335.1"/>
    <property type="molecule type" value="mRNA"/>
</dbReference>
<dbReference type="EMBL" id="AY081568">
    <property type="protein sequence ID" value="AAM10130.1"/>
    <property type="molecule type" value="mRNA"/>
</dbReference>
<dbReference type="EMBL" id="AY087429">
    <property type="protein sequence ID" value="AAM64977.1"/>
    <property type="molecule type" value="mRNA"/>
</dbReference>
<dbReference type="PIR" id="D84560">
    <property type="entry name" value="D84560"/>
</dbReference>
<dbReference type="RefSeq" id="NP_179402.1">
    <property type="nucleotide sequence ID" value="NM_127367.3"/>
</dbReference>
<dbReference type="SMR" id="Q9SI20"/>
<dbReference type="BioGRID" id="1680">
    <property type="interactions" value="4"/>
</dbReference>
<dbReference type="FunCoup" id="Q9SI20">
    <property type="interactions" value="4249"/>
</dbReference>
<dbReference type="IntAct" id="Q9SI20">
    <property type="interactions" value="1"/>
</dbReference>
<dbReference type="STRING" id="3702.Q9SI20"/>
<dbReference type="iPTMnet" id="Q9SI20"/>
<dbReference type="PaxDb" id="3702-AT2G18110.1"/>
<dbReference type="ProteomicsDB" id="221916"/>
<dbReference type="EnsemblPlants" id="AT2G18110.1">
    <property type="protein sequence ID" value="AT2G18110.1"/>
    <property type="gene ID" value="AT2G18110"/>
</dbReference>
<dbReference type="GeneID" id="816323"/>
<dbReference type="Gramene" id="AT2G18110.1">
    <property type="protein sequence ID" value="AT2G18110.1"/>
    <property type="gene ID" value="AT2G18110"/>
</dbReference>
<dbReference type="KEGG" id="ath:AT2G18110"/>
<dbReference type="Araport" id="AT2G18110"/>
<dbReference type="TAIR" id="AT2G18110"/>
<dbReference type="eggNOG" id="KOG1668">
    <property type="taxonomic scope" value="Eukaryota"/>
</dbReference>
<dbReference type="HOGENOM" id="CLU_050172_3_0_1"/>
<dbReference type="InParanoid" id="Q9SI20"/>
<dbReference type="OMA" id="CHALCWY"/>
<dbReference type="PhylomeDB" id="Q9SI20"/>
<dbReference type="CD-CODE" id="4299E36E">
    <property type="entry name" value="Nucleolus"/>
</dbReference>
<dbReference type="PRO" id="PR:Q9SI20"/>
<dbReference type="Proteomes" id="UP000006548">
    <property type="component" value="Chromosome 2"/>
</dbReference>
<dbReference type="ExpressionAtlas" id="Q9SI20">
    <property type="expression patterns" value="baseline and differential"/>
</dbReference>
<dbReference type="GO" id="GO:0005853">
    <property type="term" value="C:eukaryotic translation elongation factor 1 complex"/>
    <property type="evidence" value="ECO:0007669"/>
    <property type="project" value="InterPro"/>
</dbReference>
<dbReference type="GO" id="GO:0005739">
    <property type="term" value="C:mitochondrion"/>
    <property type="evidence" value="ECO:0007005"/>
    <property type="project" value="TAIR"/>
</dbReference>
<dbReference type="GO" id="GO:0003746">
    <property type="term" value="F:translation elongation factor activity"/>
    <property type="evidence" value="ECO:0007669"/>
    <property type="project" value="UniProtKB-KW"/>
</dbReference>
<dbReference type="CDD" id="cd00292">
    <property type="entry name" value="EF1B"/>
    <property type="match status" value="1"/>
</dbReference>
<dbReference type="FunFam" id="3.30.70.60:FF:000001">
    <property type="entry name" value="Elongation factor 1-beta 1 like"/>
    <property type="match status" value="1"/>
</dbReference>
<dbReference type="FunFam" id="1.20.1050.130:FF:000006">
    <property type="entry name" value="Elongation factor 1-delta 1"/>
    <property type="match status" value="1"/>
</dbReference>
<dbReference type="Gene3D" id="1.20.1050.130">
    <property type="match status" value="1"/>
</dbReference>
<dbReference type="Gene3D" id="3.30.70.60">
    <property type="match status" value="1"/>
</dbReference>
<dbReference type="InterPro" id="IPR036219">
    <property type="entry name" value="eEF-1beta-like_sf"/>
</dbReference>
<dbReference type="InterPro" id="IPR049720">
    <property type="entry name" value="EF1B_bsu/dsu"/>
</dbReference>
<dbReference type="InterPro" id="IPR014038">
    <property type="entry name" value="EF1B_bsu/dsu_GNE"/>
</dbReference>
<dbReference type="InterPro" id="IPR036282">
    <property type="entry name" value="Glutathione-S-Trfase_C_sf"/>
</dbReference>
<dbReference type="InterPro" id="IPR014717">
    <property type="entry name" value="Transl_elong_EF1B/ribsomal_bS6"/>
</dbReference>
<dbReference type="InterPro" id="IPR001326">
    <property type="entry name" value="Transl_elong_EF1B_B/D_CS"/>
</dbReference>
<dbReference type="PANTHER" id="PTHR11595">
    <property type="entry name" value="EF-HAND AND COILED-COIL DOMAIN-CONTAINING FAMILY MEMBER"/>
    <property type="match status" value="1"/>
</dbReference>
<dbReference type="PANTHER" id="PTHR11595:SF21">
    <property type="entry name" value="ELONGATION FACTOR 1-BETA"/>
    <property type="match status" value="1"/>
</dbReference>
<dbReference type="Pfam" id="PF00736">
    <property type="entry name" value="EF1_GNE"/>
    <property type="match status" value="1"/>
</dbReference>
<dbReference type="SMART" id="SM00888">
    <property type="entry name" value="EF1_GNE"/>
    <property type="match status" value="1"/>
</dbReference>
<dbReference type="SUPFAM" id="SSF54984">
    <property type="entry name" value="eEF-1beta-like"/>
    <property type="match status" value="1"/>
</dbReference>
<dbReference type="SUPFAM" id="SSF47616">
    <property type="entry name" value="GST C-terminal domain-like"/>
    <property type="match status" value="1"/>
</dbReference>
<dbReference type="PROSITE" id="PS00824">
    <property type="entry name" value="EF1BD_1"/>
    <property type="match status" value="1"/>
</dbReference>
<dbReference type="PROSITE" id="PS00825">
    <property type="entry name" value="EF1BD_2"/>
    <property type="match status" value="1"/>
</dbReference>
<comment type="function">
    <text evidence="1">EF-1-beta and EF-1-delta stimulate the exchange of GDP bound to EF-1-alpha to GTP.</text>
</comment>
<comment type="subunit">
    <text evidence="1">EF-1 is composed of 4 subunits: alpha, beta (1B-alpha=beta'), delta (1B-beta), and gamma (1B-gamma).</text>
</comment>
<comment type="similarity">
    <text evidence="3">Belongs to the EF-1-beta/EF-1-delta family.</text>
</comment>
<gene>
    <name type="ordered locus">At2g18110</name>
    <name type="ORF">F8D23.11</name>
    <name type="ORF">T27K22.2</name>
</gene>
<organism>
    <name type="scientific">Arabidopsis thaliana</name>
    <name type="common">Mouse-ear cress</name>
    <dbReference type="NCBI Taxonomy" id="3702"/>
    <lineage>
        <taxon>Eukaryota</taxon>
        <taxon>Viridiplantae</taxon>
        <taxon>Streptophyta</taxon>
        <taxon>Embryophyta</taxon>
        <taxon>Tracheophyta</taxon>
        <taxon>Spermatophyta</taxon>
        <taxon>Magnoliopsida</taxon>
        <taxon>eudicotyledons</taxon>
        <taxon>Gunneridae</taxon>
        <taxon>Pentapetalae</taxon>
        <taxon>rosids</taxon>
        <taxon>malvids</taxon>
        <taxon>Brassicales</taxon>
        <taxon>Brassicaceae</taxon>
        <taxon>Camelineae</taxon>
        <taxon>Arabidopsis</taxon>
    </lineage>
</organism>
<reference key="1">
    <citation type="journal article" date="1999" name="Nature">
        <title>Sequence and analysis of chromosome 2 of the plant Arabidopsis thaliana.</title>
        <authorList>
            <person name="Lin X."/>
            <person name="Kaul S."/>
            <person name="Rounsley S.D."/>
            <person name="Shea T.P."/>
            <person name="Benito M.-I."/>
            <person name="Town C.D."/>
            <person name="Fujii C.Y."/>
            <person name="Mason T.M."/>
            <person name="Bowman C.L."/>
            <person name="Barnstead M.E."/>
            <person name="Feldblyum T.V."/>
            <person name="Buell C.R."/>
            <person name="Ketchum K.A."/>
            <person name="Lee J.J."/>
            <person name="Ronning C.M."/>
            <person name="Koo H.L."/>
            <person name="Moffat K.S."/>
            <person name="Cronin L.A."/>
            <person name="Shen M."/>
            <person name="Pai G."/>
            <person name="Van Aken S."/>
            <person name="Umayam L."/>
            <person name="Tallon L.J."/>
            <person name="Gill J.E."/>
            <person name="Adams M.D."/>
            <person name="Carrera A.J."/>
            <person name="Creasy T.H."/>
            <person name="Goodman H.M."/>
            <person name="Somerville C.R."/>
            <person name="Copenhaver G.P."/>
            <person name="Preuss D."/>
            <person name="Nierman W.C."/>
            <person name="White O."/>
            <person name="Eisen J.A."/>
            <person name="Salzberg S.L."/>
            <person name="Fraser C.M."/>
            <person name="Venter J.C."/>
        </authorList>
    </citation>
    <scope>NUCLEOTIDE SEQUENCE [LARGE SCALE GENOMIC DNA]</scope>
    <source>
        <strain>cv. Columbia</strain>
    </source>
</reference>
<reference key="2">
    <citation type="journal article" date="2017" name="Plant J.">
        <title>Araport11: a complete reannotation of the Arabidopsis thaliana reference genome.</title>
        <authorList>
            <person name="Cheng C.Y."/>
            <person name="Krishnakumar V."/>
            <person name="Chan A.P."/>
            <person name="Thibaud-Nissen F."/>
            <person name="Schobel S."/>
            <person name="Town C.D."/>
        </authorList>
    </citation>
    <scope>GENOME REANNOTATION</scope>
    <source>
        <strain>cv. Columbia</strain>
    </source>
</reference>
<reference key="3">
    <citation type="journal article" date="2003" name="Science">
        <title>Empirical analysis of transcriptional activity in the Arabidopsis genome.</title>
        <authorList>
            <person name="Yamada K."/>
            <person name="Lim J."/>
            <person name="Dale J.M."/>
            <person name="Chen H."/>
            <person name="Shinn P."/>
            <person name="Palm C.J."/>
            <person name="Southwick A.M."/>
            <person name="Wu H.C."/>
            <person name="Kim C.J."/>
            <person name="Nguyen M."/>
            <person name="Pham P.K."/>
            <person name="Cheuk R.F."/>
            <person name="Karlin-Newmann G."/>
            <person name="Liu S.X."/>
            <person name="Lam B."/>
            <person name="Sakano H."/>
            <person name="Wu T."/>
            <person name="Yu G."/>
            <person name="Miranda M."/>
            <person name="Quach H.L."/>
            <person name="Tripp M."/>
            <person name="Chang C.H."/>
            <person name="Lee J.M."/>
            <person name="Toriumi M.J."/>
            <person name="Chan M.M."/>
            <person name="Tang C.C."/>
            <person name="Onodera C.S."/>
            <person name="Deng J.M."/>
            <person name="Akiyama K."/>
            <person name="Ansari Y."/>
            <person name="Arakawa T."/>
            <person name="Banh J."/>
            <person name="Banno F."/>
            <person name="Bowser L."/>
            <person name="Brooks S.Y."/>
            <person name="Carninci P."/>
            <person name="Chao Q."/>
            <person name="Choy N."/>
            <person name="Enju A."/>
            <person name="Goldsmith A.D."/>
            <person name="Gurjal M."/>
            <person name="Hansen N.F."/>
            <person name="Hayashizaki Y."/>
            <person name="Johnson-Hopson C."/>
            <person name="Hsuan V.W."/>
            <person name="Iida K."/>
            <person name="Karnes M."/>
            <person name="Khan S."/>
            <person name="Koesema E."/>
            <person name="Ishida J."/>
            <person name="Jiang P.X."/>
            <person name="Jones T."/>
            <person name="Kawai J."/>
            <person name="Kamiya A."/>
            <person name="Meyers C."/>
            <person name="Nakajima M."/>
            <person name="Narusaka M."/>
            <person name="Seki M."/>
            <person name="Sakurai T."/>
            <person name="Satou M."/>
            <person name="Tamse R."/>
            <person name="Vaysberg M."/>
            <person name="Wallender E.K."/>
            <person name="Wong C."/>
            <person name="Yamamura Y."/>
            <person name="Yuan S."/>
            <person name="Shinozaki K."/>
            <person name="Davis R.W."/>
            <person name="Theologis A."/>
            <person name="Ecker J.R."/>
        </authorList>
    </citation>
    <scope>NUCLEOTIDE SEQUENCE [LARGE SCALE MRNA]</scope>
    <source>
        <strain>cv. Columbia</strain>
    </source>
</reference>
<reference key="4">
    <citation type="submission" date="2002-03" db="EMBL/GenBank/DDBJ databases">
        <title>Full-length cDNA from Arabidopsis thaliana.</title>
        <authorList>
            <person name="Brover V.V."/>
            <person name="Troukhan M.E."/>
            <person name="Alexandrov N.A."/>
            <person name="Lu Y.-P."/>
            <person name="Flavell R.B."/>
            <person name="Feldmann K.A."/>
        </authorList>
    </citation>
    <scope>NUCLEOTIDE SEQUENCE [LARGE SCALE MRNA]</scope>
</reference>
<reference key="5">
    <citation type="journal article" date="2009" name="J. Proteomics">
        <title>Phosphoproteomic analysis of nuclei-enriched fractions from Arabidopsis thaliana.</title>
        <authorList>
            <person name="Jones A.M.E."/>
            <person name="MacLean D."/>
            <person name="Studholme D.J."/>
            <person name="Serna-Sanz A."/>
            <person name="Andreasson E."/>
            <person name="Rathjen J.P."/>
            <person name="Peck S.C."/>
        </authorList>
    </citation>
    <scope>IDENTIFICATION BY MASS SPECTROMETRY [LARGE SCALE ANALYSIS]</scope>
    <source>
        <strain>cv. Columbia</strain>
    </source>
</reference>
<reference key="6">
    <citation type="journal article" date="2012" name="Mol. Cell. Proteomics">
        <title>Comparative large-scale characterisation of plant vs. mammal proteins reveals similar and idiosyncratic N-alpha acetylation features.</title>
        <authorList>
            <person name="Bienvenut W.V."/>
            <person name="Sumpton D."/>
            <person name="Martinez A."/>
            <person name="Lilla S."/>
            <person name="Espagne C."/>
            <person name="Meinnel T."/>
            <person name="Giglione C."/>
        </authorList>
    </citation>
    <scope>ACETYLATION [LARGE SCALE ANALYSIS] AT ALA-2</scope>
    <scope>CLEAVAGE OF INITIATOR METHIONINE [LARGE SCALE ANALYSIS]</scope>
    <scope>IDENTIFICATION BY MASS SPECTROMETRY [LARGE SCALE ANALYSIS]</scope>
</reference>
<name>EF1D2_ARATH</name>
<proteinExistence type="evidence at protein level"/>
<sequence>MAAFPNLNSGSGLKKLDEHLLTRSYITGYQASKDDITVFTALSKPPTSEFVNVSRWFNHIDALLRISGVSAEGSGVIVEGSSPITEEAVATPPAADSKDTAAEEEDDDDVDLFGEETEEEKKAAEERAASVKASTKKKESGKSSVLMDIKPWDDETDMKKLEEAVRSIQMEGLFWGASKLVPVGYGIKKLHIMCTIVDDLVSIDTMIEEQLTVEPINEYVQSCDIVAFNKI</sequence>
<accession>Q9SI20</accession>
<accession>Q7GA96</accession>
<accession>Q8LB45</accession>
<feature type="initiator methionine" description="Removed" evidence="4">
    <location>
        <position position="1"/>
    </location>
</feature>
<feature type="chain" id="PRO_0000155036" description="Elongation factor 1-delta 2">
    <location>
        <begin position="2"/>
        <end position="231"/>
    </location>
</feature>
<feature type="domain" description="GST C-terminal">
    <location>
        <begin position="11"/>
        <end position="73"/>
    </location>
</feature>
<feature type="region of interest" description="Disordered" evidence="2">
    <location>
        <begin position="82"/>
        <end position="136"/>
    </location>
</feature>
<feature type="compositionally biased region" description="Acidic residues" evidence="2">
    <location>
        <begin position="102"/>
        <end position="118"/>
    </location>
</feature>
<feature type="compositionally biased region" description="Basic and acidic residues" evidence="2">
    <location>
        <begin position="119"/>
        <end position="129"/>
    </location>
</feature>
<feature type="modified residue" description="N-acetylalanine" evidence="4">
    <location>
        <position position="2"/>
    </location>
</feature>
<feature type="sequence conflict" description="In Ref. 4; AAM64977." evidence="3" ref="4">
    <original>F</original>
    <variation>Y</variation>
    <location>
        <position position="50"/>
    </location>
</feature>
<feature type="sequence conflict" description="In Ref. 4; AAM64977." evidence="3" ref="4">
    <original>V</original>
    <variation>I</variation>
    <location>
        <position position="89"/>
    </location>
</feature>
<protein>
    <recommendedName>
        <fullName>Elongation factor 1-delta 2</fullName>
        <shortName>EF-1-delta 2</shortName>
    </recommendedName>
    <alternativeName>
        <fullName>Elongation factor 1B-beta 2</fullName>
    </alternativeName>
    <alternativeName>
        <fullName>eEF-1B beta 2</fullName>
    </alternativeName>
</protein>
<keyword id="KW-0007">Acetylation</keyword>
<keyword id="KW-0251">Elongation factor</keyword>
<keyword id="KW-0648">Protein biosynthesis</keyword>
<keyword id="KW-1185">Reference proteome</keyword>